<feature type="chain" id="PRO_0000198012" description="Bis(5'-nucleosyl)-tetraphosphatase, symmetrical">
    <location>
        <begin position="1"/>
        <end position="269"/>
    </location>
</feature>
<reference key="1">
    <citation type="journal article" date="2000" name="Nature">
        <title>DNA sequence of both chromosomes of the cholera pathogen Vibrio cholerae.</title>
        <authorList>
            <person name="Heidelberg J.F."/>
            <person name="Eisen J.A."/>
            <person name="Nelson W.C."/>
            <person name="Clayton R.A."/>
            <person name="Gwinn M.L."/>
            <person name="Dodson R.J."/>
            <person name="Haft D.H."/>
            <person name="Hickey E.K."/>
            <person name="Peterson J.D."/>
            <person name="Umayam L.A."/>
            <person name="Gill S.R."/>
            <person name="Nelson K.E."/>
            <person name="Read T.D."/>
            <person name="Tettelin H."/>
            <person name="Richardson D.L."/>
            <person name="Ermolaeva M.D."/>
            <person name="Vamathevan J.J."/>
            <person name="Bass S."/>
            <person name="Qin H."/>
            <person name="Dragoi I."/>
            <person name="Sellers P."/>
            <person name="McDonald L.A."/>
            <person name="Utterback T.R."/>
            <person name="Fleischmann R.D."/>
            <person name="Nierman W.C."/>
            <person name="White O."/>
            <person name="Salzberg S.L."/>
            <person name="Smith H.O."/>
            <person name="Colwell R.R."/>
            <person name="Mekalanos J.J."/>
            <person name="Venter J.C."/>
            <person name="Fraser C.M."/>
        </authorList>
    </citation>
    <scope>NUCLEOTIDE SEQUENCE [LARGE SCALE GENOMIC DNA]</scope>
    <source>
        <strain>ATCC 39315 / El Tor Inaba N16961</strain>
    </source>
</reference>
<keyword id="KW-0378">Hydrolase</keyword>
<keyword id="KW-1185">Reference proteome</keyword>
<accession>Q9KUS4</accession>
<gene>
    <name type="primary">apaH</name>
    <name type="ordered locus">VC_0441</name>
</gene>
<organism>
    <name type="scientific">Vibrio cholerae serotype O1 (strain ATCC 39315 / El Tor Inaba N16961)</name>
    <dbReference type="NCBI Taxonomy" id="243277"/>
    <lineage>
        <taxon>Bacteria</taxon>
        <taxon>Pseudomonadati</taxon>
        <taxon>Pseudomonadota</taxon>
        <taxon>Gammaproteobacteria</taxon>
        <taxon>Vibrionales</taxon>
        <taxon>Vibrionaceae</taxon>
        <taxon>Vibrio</taxon>
    </lineage>
</organism>
<comment type="function">
    <text evidence="1">Hydrolyzes diadenosine 5',5'''-P1,P4-tetraphosphate to yield ADP.</text>
</comment>
<comment type="catalytic activity">
    <reaction>
        <text>P(1),P(4)-bis(5'-adenosyl) tetraphosphate + H2O = 2 ADP + 2 H(+)</text>
        <dbReference type="Rhea" id="RHEA:24252"/>
        <dbReference type="ChEBI" id="CHEBI:15377"/>
        <dbReference type="ChEBI" id="CHEBI:15378"/>
        <dbReference type="ChEBI" id="CHEBI:58141"/>
        <dbReference type="ChEBI" id="CHEBI:456216"/>
        <dbReference type="EC" id="3.6.1.41"/>
    </reaction>
</comment>
<comment type="similarity">
    <text evidence="2">Belongs to the Ap4A hydrolase family.</text>
</comment>
<name>APAH_VIBCH</name>
<sequence length="269" mass="30408">MANYIVGDIQGCFDELQQLLKQAEFNSQLDTLWFAGDLVARGPKSLETLRFVYQLGDAARVVLGNHDLHLLSVALGHHSAKRRDQTQAVLDAPDAAPLLDWLRQQPLLAEHQEFVLCHAGISPQWDLATARQAAQEVESVLRSPEWSTLIEQMYSDQPDAWHPTLQGIDRLRYIVNAFTRMRFCFPDGRLDMQCKLPPKEVTDGSLLPWFQLPQRIALEKTVIFGHWAALEGYVSETVIGLDTGCVWGGTLTMLRWEDKHYFSQAALPA</sequence>
<protein>
    <recommendedName>
        <fullName>Bis(5'-nucleosyl)-tetraphosphatase, symmetrical</fullName>
        <ecNumber>3.6.1.41</ecNumber>
    </recommendedName>
    <alternativeName>
        <fullName>Ap4A hydrolase</fullName>
    </alternativeName>
    <alternativeName>
        <fullName>Diadenosine 5',5'''-P1,P4-tetraphosphate pyrophosphohydrolase</fullName>
    </alternativeName>
    <alternativeName>
        <fullName>Diadenosine tetraphosphatase</fullName>
    </alternativeName>
</protein>
<proteinExistence type="inferred from homology"/>
<dbReference type="EC" id="3.6.1.41"/>
<dbReference type="EMBL" id="AE003852">
    <property type="protein sequence ID" value="AAF93614.1"/>
    <property type="molecule type" value="Genomic_DNA"/>
</dbReference>
<dbReference type="PIR" id="H82322">
    <property type="entry name" value="H82322"/>
</dbReference>
<dbReference type="RefSeq" id="NP_230095.1">
    <property type="nucleotide sequence ID" value="NC_002505.1"/>
</dbReference>
<dbReference type="RefSeq" id="WP_000035032.1">
    <property type="nucleotide sequence ID" value="NZ_LT906614.1"/>
</dbReference>
<dbReference type="SMR" id="Q9KUS4"/>
<dbReference type="STRING" id="243277.VC_0441"/>
<dbReference type="DNASU" id="2615702"/>
<dbReference type="EnsemblBacteria" id="AAF93614">
    <property type="protein sequence ID" value="AAF93614"/>
    <property type="gene ID" value="VC_0441"/>
</dbReference>
<dbReference type="KEGG" id="vch:VC_0441"/>
<dbReference type="PATRIC" id="fig|243277.26.peg.415"/>
<dbReference type="eggNOG" id="COG0639">
    <property type="taxonomic scope" value="Bacteria"/>
</dbReference>
<dbReference type="HOGENOM" id="CLU_056184_2_0_6"/>
<dbReference type="Proteomes" id="UP000000584">
    <property type="component" value="Chromosome 1"/>
</dbReference>
<dbReference type="GO" id="GO:0005737">
    <property type="term" value="C:cytoplasm"/>
    <property type="evidence" value="ECO:0000318"/>
    <property type="project" value="GO_Central"/>
</dbReference>
<dbReference type="GO" id="GO:0008803">
    <property type="term" value="F:bis(5'-nucleosyl)-tetraphosphatase (symmetrical) activity"/>
    <property type="evidence" value="ECO:0000318"/>
    <property type="project" value="GO_Central"/>
</dbReference>
<dbReference type="GO" id="GO:0016791">
    <property type="term" value="F:phosphatase activity"/>
    <property type="evidence" value="ECO:0000318"/>
    <property type="project" value="GO_Central"/>
</dbReference>
<dbReference type="GO" id="GO:0110154">
    <property type="term" value="P:RNA decapping"/>
    <property type="evidence" value="ECO:0000318"/>
    <property type="project" value="GO_Central"/>
</dbReference>
<dbReference type="CDD" id="cd07422">
    <property type="entry name" value="MPP_ApaH"/>
    <property type="match status" value="1"/>
</dbReference>
<dbReference type="FunFam" id="3.60.21.10:FF:000013">
    <property type="entry name" value="Bis(5'-nucleosyl)-tetraphosphatase, symmetrical"/>
    <property type="match status" value="1"/>
</dbReference>
<dbReference type="Gene3D" id="3.60.21.10">
    <property type="match status" value="1"/>
</dbReference>
<dbReference type="HAMAP" id="MF_00199">
    <property type="entry name" value="ApaH"/>
    <property type="match status" value="1"/>
</dbReference>
<dbReference type="InterPro" id="IPR004617">
    <property type="entry name" value="ApaH"/>
</dbReference>
<dbReference type="InterPro" id="IPR004843">
    <property type="entry name" value="Calcineurin-like_PHP_ApaH"/>
</dbReference>
<dbReference type="InterPro" id="IPR029052">
    <property type="entry name" value="Metallo-depent_PP-like"/>
</dbReference>
<dbReference type="NCBIfam" id="TIGR00668">
    <property type="entry name" value="apaH"/>
    <property type="match status" value="1"/>
</dbReference>
<dbReference type="NCBIfam" id="NF001204">
    <property type="entry name" value="PRK00166.1"/>
    <property type="match status" value="1"/>
</dbReference>
<dbReference type="PANTHER" id="PTHR40942">
    <property type="match status" value="1"/>
</dbReference>
<dbReference type="PANTHER" id="PTHR40942:SF4">
    <property type="entry name" value="CYTOCHROME C5"/>
    <property type="match status" value="1"/>
</dbReference>
<dbReference type="Pfam" id="PF00149">
    <property type="entry name" value="Metallophos"/>
    <property type="match status" value="1"/>
</dbReference>
<dbReference type="PIRSF" id="PIRSF000903">
    <property type="entry name" value="B5n-ttraPtase_sm"/>
    <property type="match status" value="1"/>
</dbReference>
<dbReference type="SUPFAM" id="SSF56300">
    <property type="entry name" value="Metallo-dependent phosphatases"/>
    <property type="match status" value="1"/>
</dbReference>
<evidence type="ECO:0000250" key="1"/>
<evidence type="ECO:0000305" key="2"/>